<accession>P42362</accession>
<feature type="chain" id="PRO_0000171177" description="Manganese import system permease protein ScaB">
    <location>
        <begin position="1"/>
        <end position="278"/>
    </location>
</feature>
<feature type="transmembrane region" description="Helical" evidence="2">
    <location>
        <begin position="18"/>
        <end position="38"/>
    </location>
</feature>
<feature type="transmembrane region" description="Helical" evidence="2">
    <location>
        <begin position="40"/>
        <end position="60"/>
    </location>
</feature>
<feature type="transmembrane region" description="Helical" evidence="2">
    <location>
        <begin position="61"/>
        <end position="81"/>
    </location>
</feature>
<feature type="transmembrane region" description="Helical" evidence="2">
    <location>
        <begin position="136"/>
        <end position="156"/>
    </location>
</feature>
<feature type="transmembrane region" description="Helical" evidence="2">
    <location>
        <begin position="172"/>
        <end position="192"/>
    </location>
</feature>
<feature type="transmembrane region" description="Helical" evidence="2">
    <location>
        <begin position="194"/>
        <end position="214"/>
    </location>
</feature>
<feature type="transmembrane region" description="Helical" evidence="2">
    <location>
        <begin position="220"/>
        <end position="240"/>
    </location>
</feature>
<feature type="transmembrane region" description="Helical" evidence="2">
    <location>
        <begin position="244"/>
        <end position="264"/>
    </location>
</feature>
<reference key="1">
    <citation type="journal article" date="1994" name="Infect. Immun.">
        <title>Cloning and nucleotide sequence analysis of psaA, the Streptococcus pneumoniae gene encoding a 37-kilodalton protein homologous to previously reported Streptococcus sp. adhesins.</title>
        <authorList>
            <person name="Sampson J.S."/>
            <person name="O'Connor S.P."/>
            <person name="Stinson A.R."/>
            <person name="Tharpe J.A."/>
            <person name="Russell H."/>
        </authorList>
    </citation>
    <scope>NUCLEOTIDE SEQUENCE [GENOMIC DNA]</scope>
    <source>
        <strain>R36A</strain>
    </source>
</reference>
<name>MTSB_STREE</name>
<proteinExistence type="inferred from homology"/>
<organism>
    <name type="scientific">Streptococcus pneumoniae</name>
    <dbReference type="NCBI Taxonomy" id="1313"/>
    <lineage>
        <taxon>Bacteria</taxon>
        <taxon>Bacillati</taxon>
        <taxon>Bacillota</taxon>
        <taxon>Bacilli</taxon>
        <taxon>Lactobacillales</taxon>
        <taxon>Streptococcaceae</taxon>
        <taxon>Streptococcus</taxon>
    </lineage>
</organism>
<dbReference type="EMBL" id="L19055">
    <property type="protein sequence ID" value="AAA16797.1"/>
    <property type="molecule type" value="Unassigned_DNA"/>
</dbReference>
<dbReference type="SMR" id="P42362"/>
<dbReference type="GO" id="GO:0043190">
    <property type="term" value="C:ATP-binding cassette (ABC) transporter complex"/>
    <property type="evidence" value="ECO:0007669"/>
    <property type="project" value="InterPro"/>
</dbReference>
<dbReference type="GO" id="GO:0010043">
    <property type="term" value="P:response to zinc ion"/>
    <property type="evidence" value="ECO:0007669"/>
    <property type="project" value="TreeGrafter"/>
</dbReference>
<dbReference type="GO" id="GO:0055085">
    <property type="term" value="P:transmembrane transport"/>
    <property type="evidence" value="ECO:0007669"/>
    <property type="project" value="InterPro"/>
</dbReference>
<dbReference type="CDD" id="cd06550">
    <property type="entry name" value="TM_ABC_iron-siderophores_like"/>
    <property type="match status" value="1"/>
</dbReference>
<dbReference type="FunFam" id="1.10.3470.10:FF:000003">
    <property type="entry name" value="Iron ABC transporter permease SitD"/>
    <property type="match status" value="1"/>
</dbReference>
<dbReference type="Gene3D" id="1.10.3470.10">
    <property type="entry name" value="ABC transporter involved in vitamin B12 uptake, BtuC"/>
    <property type="match status" value="1"/>
</dbReference>
<dbReference type="InterPro" id="IPR037294">
    <property type="entry name" value="ABC_BtuC-like"/>
</dbReference>
<dbReference type="InterPro" id="IPR001626">
    <property type="entry name" value="ABC_TroCD"/>
</dbReference>
<dbReference type="PANTHER" id="PTHR30477">
    <property type="entry name" value="ABC-TRANSPORTER METAL-BINDING PROTEIN"/>
    <property type="match status" value="1"/>
</dbReference>
<dbReference type="PANTHER" id="PTHR30477:SF13">
    <property type="entry name" value="IRON TRANSPORT SYSTEM MEMBRANE PROTEIN HI_0360-RELATED"/>
    <property type="match status" value="1"/>
</dbReference>
<dbReference type="Pfam" id="PF00950">
    <property type="entry name" value="ABC-3"/>
    <property type="match status" value="1"/>
</dbReference>
<dbReference type="SUPFAM" id="SSF81345">
    <property type="entry name" value="ABC transporter involved in vitamin B12 uptake, BtuC"/>
    <property type="match status" value="1"/>
</dbReference>
<evidence type="ECO:0000250" key="1">
    <source>
        <dbReference type="UniProtKB" id="P42361"/>
    </source>
</evidence>
<evidence type="ECO:0000255" key="2"/>
<evidence type="ECO:0000305" key="3"/>
<comment type="function">
    <text evidence="1">Part of an ABC transporter complex involved in manganese import.</text>
</comment>
<comment type="subcellular location">
    <subcellularLocation>
        <location evidence="3">Cell membrane</location>
        <topology evidence="2">Multi-pass membrane protein</topology>
    </subcellularLocation>
</comment>
<comment type="similarity">
    <text evidence="3">Belongs to the ABC-3 integral membrane protein family.</text>
</comment>
<sequence>MITEFIDGLQQFHFLQNALITAIAIGIVAGAVGCFIILRGMSLMGDAISHAVLPGVALSFILGINFFIGAIAFGLLASILITYIKSNSIIKSDTAMGYLSLPRPRSHSDRVAKSSTDLFHILFGNILAVQDQDMWVTIGVGVAVLLVIVLLFRPLLLTSFDPVLAQSMGVRVKLYHYLLMVLLTLVSVTAMQSVGTILIAAMLITPAATAYLYANSLWSMMLLSSGLGALASILGLFIGYSFNIAVGSCIVLTSAIFFLISFFIAPKQRKNKHALSPH</sequence>
<protein>
    <recommendedName>
        <fullName evidence="1">Manganese import system permease protein ScaB</fullName>
    </recommendedName>
    <alternativeName>
        <fullName>ORF1</fullName>
    </alternativeName>
</protein>
<keyword id="KW-1003">Cell membrane</keyword>
<keyword id="KW-0472">Membrane</keyword>
<keyword id="KW-0812">Transmembrane</keyword>
<keyword id="KW-1133">Transmembrane helix</keyword>
<keyword id="KW-0813">Transport</keyword>